<name>RL11_ANAD2</name>
<gene>
    <name evidence="1" type="primary">rplK</name>
    <name type="ordered locus">A2cp1_2363</name>
</gene>
<feature type="chain" id="PRO_1000195579" description="Large ribosomal subunit protein uL11">
    <location>
        <begin position="1"/>
        <end position="148"/>
    </location>
</feature>
<feature type="region of interest" description="Disordered" evidence="2">
    <location>
        <begin position="89"/>
        <end position="108"/>
    </location>
</feature>
<reference key="1">
    <citation type="submission" date="2009-01" db="EMBL/GenBank/DDBJ databases">
        <title>Complete sequence of Anaeromyxobacter dehalogenans 2CP-1.</title>
        <authorList>
            <person name="Lucas S."/>
            <person name="Copeland A."/>
            <person name="Lapidus A."/>
            <person name="Glavina del Rio T."/>
            <person name="Dalin E."/>
            <person name="Tice H."/>
            <person name="Bruce D."/>
            <person name="Goodwin L."/>
            <person name="Pitluck S."/>
            <person name="Saunders E."/>
            <person name="Brettin T."/>
            <person name="Detter J.C."/>
            <person name="Han C."/>
            <person name="Larimer F."/>
            <person name="Land M."/>
            <person name="Hauser L."/>
            <person name="Kyrpides N."/>
            <person name="Ovchinnikova G."/>
            <person name="Beliaev A.S."/>
            <person name="Richardson P."/>
        </authorList>
    </citation>
    <scope>NUCLEOTIDE SEQUENCE [LARGE SCALE GENOMIC DNA]</scope>
    <source>
        <strain>2CP-1 / ATCC BAA-258</strain>
    </source>
</reference>
<organism>
    <name type="scientific">Anaeromyxobacter dehalogenans (strain 2CP-1 / ATCC BAA-258)</name>
    <dbReference type="NCBI Taxonomy" id="455488"/>
    <lineage>
        <taxon>Bacteria</taxon>
        <taxon>Pseudomonadati</taxon>
        <taxon>Myxococcota</taxon>
        <taxon>Myxococcia</taxon>
        <taxon>Myxococcales</taxon>
        <taxon>Cystobacterineae</taxon>
        <taxon>Anaeromyxobacteraceae</taxon>
        <taxon>Anaeromyxobacter</taxon>
    </lineage>
</organism>
<comment type="function">
    <text evidence="1">Forms part of the ribosomal stalk which helps the ribosome interact with GTP-bound translation factors.</text>
</comment>
<comment type="subunit">
    <text evidence="1">Part of the ribosomal stalk of the 50S ribosomal subunit. Interacts with L10 and the large rRNA to form the base of the stalk. L10 forms an elongated spine to which L12 dimers bind in a sequential fashion forming a multimeric L10(L12)X complex.</text>
</comment>
<comment type="PTM">
    <text evidence="1">One or more lysine residues are methylated.</text>
</comment>
<comment type="similarity">
    <text evidence="1">Belongs to the universal ribosomal protein uL11 family.</text>
</comment>
<accession>B8JB74</accession>
<protein>
    <recommendedName>
        <fullName evidence="1">Large ribosomal subunit protein uL11</fullName>
    </recommendedName>
    <alternativeName>
        <fullName evidence="3">50S ribosomal protein L11</fullName>
    </alternativeName>
</protein>
<proteinExistence type="inferred from homology"/>
<dbReference type="EMBL" id="CP001359">
    <property type="protein sequence ID" value="ACL65701.1"/>
    <property type="molecule type" value="Genomic_DNA"/>
</dbReference>
<dbReference type="RefSeq" id="WP_011420644.1">
    <property type="nucleotide sequence ID" value="NC_011891.1"/>
</dbReference>
<dbReference type="SMR" id="B8JB74"/>
<dbReference type="KEGG" id="acp:A2cp1_2363"/>
<dbReference type="HOGENOM" id="CLU_074237_2_0_7"/>
<dbReference type="Proteomes" id="UP000007089">
    <property type="component" value="Chromosome"/>
</dbReference>
<dbReference type="GO" id="GO:0022625">
    <property type="term" value="C:cytosolic large ribosomal subunit"/>
    <property type="evidence" value="ECO:0007669"/>
    <property type="project" value="TreeGrafter"/>
</dbReference>
<dbReference type="GO" id="GO:0070180">
    <property type="term" value="F:large ribosomal subunit rRNA binding"/>
    <property type="evidence" value="ECO:0007669"/>
    <property type="project" value="UniProtKB-UniRule"/>
</dbReference>
<dbReference type="GO" id="GO:0003735">
    <property type="term" value="F:structural constituent of ribosome"/>
    <property type="evidence" value="ECO:0007669"/>
    <property type="project" value="InterPro"/>
</dbReference>
<dbReference type="GO" id="GO:0006412">
    <property type="term" value="P:translation"/>
    <property type="evidence" value="ECO:0007669"/>
    <property type="project" value="UniProtKB-UniRule"/>
</dbReference>
<dbReference type="CDD" id="cd00349">
    <property type="entry name" value="Ribosomal_L11"/>
    <property type="match status" value="1"/>
</dbReference>
<dbReference type="FunFam" id="1.10.10.250:FF:000001">
    <property type="entry name" value="50S ribosomal protein L11"/>
    <property type="match status" value="1"/>
</dbReference>
<dbReference type="FunFam" id="3.30.1550.10:FF:000001">
    <property type="entry name" value="50S ribosomal protein L11"/>
    <property type="match status" value="1"/>
</dbReference>
<dbReference type="Gene3D" id="1.10.10.250">
    <property type="entry name" value="Ribosomal protein L11, C-terminal domain"/>
    <property type="match status" value="1"/>
</dbReference>
<dbReference type="Gene3D" id="3.30.1550.10">
    <property type="entry name" value="Ribosomal protein L11/L12, N-terminal domain"/>
    <property type="match status" value="1"/>
</dbReference>
<dbReference type="HAMAP" id="MF_00736">
    <property type="entry name" value="Ribosomal_uL11"/>
    <property type="match status" value="1"/>
</dbReference>
<dbReference type="InterPro" id="IPR000911">
    <property type="entry name" value="Ribosomal_uL11"/>
</dbReference>
<dbReference type="InterPro" id="IPR006519">
    <property type="entry name" value="Ribosomal_uL11_bac-typ"/>
</dbReference>
<dbReference type="InterPro" id="IPR020783">
    <property type="entry name" value="Ribosomal_uL11_C"/>
</dbReference>
<dbReference type="InterPro" id="IPR036769">
    <property type="entry name" value="Ribosomal_uL11_C_sf"/>
</dbReference>
<dbReference type="InterPro" id="IPR020785">
    <property type="entry name" value="Ribosomal_uL11_CS"/>
</dbReference>
<dbReference type="InterPro" id="IPR020784">
    <property type="entry name" value="Ribosomal_uL11_N"/>
</dbReference>
<dbReference type="InterPro" id="IPR036796">
    <property type="entry name" value="Ribosomal_uL11_N_sf"/>
</dbReference>
<dbReference type="NCBIfam" id="TIGR01632">
    <property type="entry name" value="L11_bact"/>
    <property type="match status" value="1"/>
</dbReference>
<dbReference type="PANTHER" id="PTHR11661">
    <property type="entry name" value="60S RIBOSOMAL PROTEIN L12"/>
    <property type="match status" value="1"/>
</dbReference>
<dbReference type="PANTHER" id="PTHR11661:SF1">
    <property type="entry name" value="LARGE RIBOSOMAL SUBUNIT PROTEIN UL11M"/>
    <property type="match status" value="1"/>
</dbReference>
<dbReference type="Pfam" id="PF00298">
    <property type="entry name" value="Ribosomal_L11"/>
    <property type="match status" value="1"/>
</dbReference>
<dbReference type="Pfam" id="PF03946">
    <property type="entry name" value="Ribosomal_L11_N"/>
    <property type="match status" value="1"/>
</dbReference>
<dbReference type="SMART" id="SM00649">
    <property type="entry name" value="RL11"/>
    <property type="match status" value="1"/>
</dbReference>
<dbReference type="SUPFAM" id="SSF54747">
    <property type="entry name" value="Ribosomal L11/L12e N-terminal domain"/>
    <property type="match status" value="1"/>
</dbReference>
<dbReference type="SUPFAM" id="SSF46906">
    <property type="entry name" value="Ribosomal protein L11, C-terminal domain"/>
    <property type="match status" value="1"/>
</dbReference>
<dbReference type="PROSITE" id="PS00359">
    <property type="entry name" value="RIBOSOMAL_L11"/>
    <property type="match status" value="1"/>
</dbReference>
<evidence type="ECO:0000255" key="1">
    <source>
        <dbReference type="HAMAP-Rule" id="MF_00736"/>
    </source>
</evidence>
<evidence type="ECO:0000256" key="2">
    <source>
        <dbReference type="SAM" id="MobiDB-lite"/>
    </source>
</evidence>
<evidence type="ECO:0000305" key="3"/>
<sequence length="148" mass="15714">MKKVTGQIKLQLPAGKANPAPPVGPALGQHGVNIMEFCKQFNAATQAQAKEALIIPVIITVYQDRSFTFVLKTPPAAILLKKAAGLHTEKKKGSGAHKPGKEKVGQVTRKQVEQIAKTKMQDMTAGTLEAAMRTVEGTALSMGIEIVG</sequence>
<keyword id="KW-0488">Methylation</keyword>
<keyword id="KW-0687">Ribonucleoprotein</keyword>
<keyword id="KW-0689">Ribosomal protein</keyword>
<keyword id="KW-0694">RNA-binding</keyword>
<keyword id="KW-0699">rRNA-binding</keyword>